<protein>
    <recommendedName>
        <fullName evidence="5">Chitin synthase 2</fullName>
        <ecNumber evidence="4">2.4.1.16</ecNumber>
    </recommendedName>
    <alternativeName>
        <fullName evidence="6">Chitin-UDP acetyl-glucosaminyl transferase 2</fullName>
    </alternativeName>
    <alternativeName>
        <fullName evidence="5">Class-II chitin synthase 2</fullName>
    </alternativeName>
</protein>
<comment type="function">
    <text evidence="4 7">Polymerizes chitin, a structural polymer of the cell wall and septum, by transferring the sugar moiety of UDP-GlcNAc to the non-reducing end of the growing chitin polymer (Probable). Plays an important role in cell wall integrity and has distinct functions in invasive hyphae and vegetative hyphae, but is not involved in plant infection (PubMed:22346755).</text>
</comment>
<comment type="catalytic activity">
    <reaction evidence="7">
        <text>[(1-&gt;4)-N-acetyl-beta-D-glucosaminyl](n) + UDP-N-acetyl-alpha-D-glucosamine = [(1-&gt;4)-N-acetyl-beta-D-glucosaminyl](n+1) + UDP + H(+)</text>
        <dbReference type="Rhea" id="RHEA:16637"/>
        <dbReference type="Rhea" id="RHEA-COMP:9593"/>
        <dbReference type="Rhea" id="RHEA-COMP:9595"/>
        <dbReference type="ChEBI" id="CHEBI:15378"/>
        <dbReference type="ChEBI" id="CHEBI:17029"/>
        <dbReference type="ChEBI" id="CHEBI:57705"/>
        <dbReference type="ChEBI" id="CHEBI:58223"/>
        <dbReference type="EC" id="2.4.1.16"/>
    </reaction>
    <physiologicalReaction direction="left-to-right" evidence="7">
        <dbReference type="Rhea" id="RHEA:16638"/>
    </physiologicalReaction>
</comment>
<comment type="subcellular location">
    <subcellularLocation>
        <location evidence="6">Cell membrane</location>
        <topology evidence="1">Multi-pass membrane protein</topology>
    </subcellularLocation>
</comment>
<comment type="induction">
    <text evidence="4">Expression is low in vegetative hyphae, conidia, appressoria, and infected rice leaves.</text>
</comment>
<comment type="disruption phenotype">
    <text evidence="4">Leads to increased sensitivity to Calcofluor white, Congo red, and Nikkomycin Z (PubMed:22346755). Results in a 20% reduction in vegetative growth (PubMed:22346755). Reduces conidiation over 5-fold (PubMed:22346755). Does not significantly changes in the chitin content in vegetative hyphae, nor in conidia (PubMed:22346755).</text>
</comment>
<comment type="similarity">
    <text evidence="6">Belongs to the chitin synthase family. Class II subfamily.</text>
</comment>
<feature type="chain" id="PRO_0000460877" description="Chitin synthase 2">
    <location>
        <begin position="1"/>
        <end position="1029"/>
    </location>
</feature>
<feature type="transmembrane region" description="Helical" evidence="1">
    <location>
        <begin position="639"/>
        <end position="659"/>
    </location>
</feature>
<feature type="transmembrane region" description="Helical" evidence="1">
    <location>
        <begin position="681"/>
        <end position="701"/>
    </location>
</feature>
<feature type="transmembrane region" description="Helical" evidence="1">
    <location>
        <begin position="716"/>
        <end position="736"/>
    </location>
</feature>
<feature type="transmembrane region" description="Helical" evidence="1">
    <location>
        <begin position="752"/>
        <end position="772"/>
    </location>
</feature>
<feature type="transmembrane region" description="Helical" evidence="1">
    <location>
        <begin position="791"/>
        <end position="811"/>
    </location>
</feature>
<feature type="transmembrane region" description="Helical" evidence="1">
    <location>
        <begin position="820"/>
        <end position="840"/>
    </location>
</feature>
<feature type="transmembrane region" description="Helical" evidence="1">
    <location>
        <begin position="918"/>
        <end position="938"/>
    </location>
</feature>
<feature type="transmembrane region" description="Helical" evidence="1">
    <location>
        <begin position="952"/>
        <end position="972"/>
    </location>
</feature>
<feature type="region of interest" description="Disordered" evidence="3">
    <location>
        <begin position="1"/>
        <end position="160"/>
    </location>
</feature>
<feature type="region of interest" description="Disordered" evidence="3">
    <location>
        <begin position="174"/>
        <end position="216"/>
    </location>
</feature>
<feature type="region of interest" description="Disordered" evidence="3">
    <location>
        <begin position="234"/>
        <end position="257"/>
    </location>
</feature>
<feature type="compositionally biased region" description="Low complexity" evidence="3">
    <location>
        <begin position="61"/>
        <end position="77"/>
    </location>
</feature>
<feature type="compositionally biased region" description="Basic and acidic residues" evidence="3">
    <location>
        <begin position="244"/>
        <end position="257"/>
    </location>
</feature>
<feature type="glycosylation site" description="N-linked (GlcNAc...) asparagine" evidence="2">
    <location>
        <position position="348"/>
    </location>
</feature>
<keyword id="KW-1003">Cell membrane</keyword>
<keyword id="KW-0325">Glycoprotein</keyword>
<keyword id="KW-0328">Glycosyltransferase</keyword>
<keyword id="KW-0472">Membrane</keyword>
<keyword id="KW-1185">Reference proteome</keyword>
<keyword id="KW-0808">Transferase</keyword>
<keyword id="KW-0812">Transmembrane</keyword>
<keyword id="KW-1133">Transmembrane helix</keyword>
<evidence type="ECO:0000255" key="1"/>
<evidence type="ECO:0000255" key="2">
    <source>
        <dbReference type="PROSITE-ProRule" id="PRU00498"/>
    </source>
</evidence>
<evidence type="ECO:0000256" key="3">
    <source>
        <dbReference type="SAM" id="MobiDB-lite"/>
    </source>
</evidence>
<evidence type="ECO:0000269" key="4">
    <source>
    </source>
</evidence>
<evidence type="ECO:0000303" key="5">
    <source>
    </source>
</evidence>
<evidence type="ECO:0000305" key="6"/>
<evidence type="ECO:0000305" key="7">
    <source>
    </source>
</evidence>
<accession>G4NIR3</accession>
<sequence length="1029" mass="115157">MDRPHSRGAPPSYSNYDEDPDELRLGPAGNPAAVRLLPASSFDEEIPETRHSRPTHRAYQPSVSSIHSRPSSISNIPSMPPPTESYVSYRETGSPTRPWTPSHVGRSSDEYRRAPPSSVHYERADLNGSPRPGTPSSRYGGSPRRPLPPAPLFAGPGARSSAFADDATVSIPLSDVDDPFGPGSADLGEARGHRGSYAAQSQVTLNEDDDEGSHLRESDIGYDEADAVDEKSAAHYGPAPAEGDQQRRGVREPQKSRKEVQLINGELVLETKIPTILYSFLPRRDADEFTHMRYTAVTCDPDDFVERGYKLRQNIGVTARETELFVCVTMYNENEYDFTRTMHAVMKNISHFCRRSKSRTWGENGWQKIVVCIVSDGREKIHPRTLDALAAMGVYQHGIAKNYVNQKAVQAHVYEYTTQVSLDADLKFKGAEKGIVPCQMLFCLKERNQRKLNSHRWFFNAFGKALNPNVCILLDVGTRPGGNSLYHLWKAFDTDSNVAGACGEIKAMKGRLGQNLLNPLVASQNFEYKMSNILDKPLESVFGYITVLPGALSAYRYHALQNDANGHGPLSQYFKGETLHGQHADVFTANMYLAEDRILCWELVAKRDERWVLKYVKGCTGETDVPDTVPEFISQRRRWLNGAFFAAIYSLVHFRQLWATDHTVARKVLLHIEFVYQLLQVLFTFFSLANFYLTFYFVAGGLADPLIDPFGNRIGLYIFTILRYTLILLICAQFILSLGNRPQGAKKPYFASMVIYGIVMVYTTFAAFYIVIRQLTDPKAKLEMGNNVFTNLIVSMASTIGLYFLMSFIYLDPWHMFTSSIQYFMLLPSYLCTLQVYAFCNTHDVTWGTKGDNVMKTDLGGAVGKGSTVELEMPSEQLDIDSGYDEALRNLRDRIEVPKSGDSEAQMQEDYYKSVRTYMVVSWMIANGILGMAVSEIYSDRTISENYYLRFILWSVASLALFRALGSTTFAIINAVNIAVEGRVRLSLKLPTWLGGSRGSKSAISSSVGSGTSIFTGLGEKITATLRRR</sequence>
<reference key="1">
    <citation type="journal article" date="2005" name="Nature">
        <title>The genome sequence of the rice blast fungus Magnaporthe grisea.</title>
        <authorList>
            <person name="Dean R.A."/>
            <person name="Talbot N.J."/>
            <person name="Ebbole D.J."/>
            <person name="Farman M.L."/>
            <person name="Mitchell T.K."/>
            <person name="Orbach M.J."/>
            <person name="Thon M.R."/>
            <person name="Kulkarni R."/>
            <person name="Xu J.-R."/>
            <person name="Pan H."/>
            <person name="Read N.D."/>
            <person name="Lee Y.-H."/>
            <person name="Carbone I."/>
            <person name="Brown D."/>
            <person name="Oh Y.Y."/>
            <person name="Donofrio N."/>
            <person name="Jeong J.S."/>
            <person name="Soanes D.M."/>
            <person name="Djonovic S."/>
            <person name="Kolomiets E."/>
            <person name="Rehmeyer C."/>
            <person name="Li W."/>
            <person name="Harding M."/>
            <person name="Kim S."/>
            <person name="Lebrun M.-H."/>
            <person name="Bohnert H."/>
            <person name="Coughlan S."/>
            <person name="Butler J."/>
            <person name="Calvo S.E."/>
            <person name="Ma L.-J."/>
            <person name="Nicol R."/>
            <person name="Purcell S."/>
            <person name="Nusbaum C."/>
            <person name="Galagan J.E."/>
            <person name="Birren B.W."/>
        </authorList>
    </citation>
    <scope>NUCLEOTIDE SEQUENCE [LARGE SCALE GENOMIC DNA]</scope>
    <source>
        <strain>70-15 / ATCC MYA-4617 / FGSC 8958</strain>
    </source>
</reference>
<reference key="2">
    <citation type="journal article" date="2012" name="PLoS Pathog.">
        <title>Different chitin synthase genes are required for various developmental and plant infection processes in the rice blast fungus Magnaporthe oryzae.</title>
        <authorList>
            <person name="Kong L.A."/>
            <person name="Yang J."/>
            <person name="Li G.T."/>
            <person name="Qi L.L."/>
            <person name="Zhang Y.J."/>
            <person name="Wang C.F."/>
            <person name="Zhao W.S."/>
            <person name="Xu J.R."/>
            <person name="Peng Y.L."/>
        </authorList>
    </citation>
    <scope>FUNCTION</scope>
    <scope>INDUCTION</scope>
    <scope>DISRUPTION PHENOTYPE</scope>
</reference>
<name>CHS2_PYRO7</name>
<dbReference type="EC" id="2.4.1.16" evidence="4"/>
<dbReference type="EMBL" id="CM001236">
    <property type="protein sequence ID" value="EHA47318.1"/>
    <property type="molecule type" value="Genomic_DNA"/>
</dbReference>
<dbReference type="RefSeq" id="XP_003719685.1">
    <property type="nucleotide sequence ID" value="XM_003719637.1"/>
</dbReference>
<dbReference type="SMR" id="G4NIR3"/>
<dbReference type="FunCoup" id="G4NIR3">
    <property type="interactions" value="80"/>
</dbReference>
<dbReference type="STRING" id="242507.G4NIR3"/>
<dbReference type="EnsemblFungi" id="MGG_04145T0">
    <property type="protein sequence ID" value="MGG_04145T0"/>
    <property type="gene ID" value="MGG_04145"/>
</dbReference>
<dbReference type="GeneID" id="2677655"/>
<dbReference type="KEGG" id="mgr:MGG_04145"/>
<dbReference type="VEuPathDB" id="FungiDB:MGG_04145"/>
<dbReference type="eggNOG" id="KOG2571">
    <property type="taxonomic scope" value="Eukaryota"/>
</dbReference>
<dbReference type="HOGENOM" id="CLU_004760_1_1_1"/>
<dbReference type="InParanoid" id="G4NIR3"/>
<dbReference type="OMA" id="TTMRETE"/>
<dbReference type="OrthoDB" id="26569at2759"/>
<dbReference type="Proteomes" id="UP000009058">
    <property type="component" value="Chromosome 6"/>
</dbReference>
<dbReference type="GO" id="GO:0030428">
    <property type="term" value="C:cell septum"/>
    <property type="evidence" value="ECO:0007669"/>
    <property type="project" value="TreeGrafter"/>
</dbReference>
<dbReference type="GO" id="GO:0005935">
    <property type="term" value="C:cellular bud neck"/>
    <property type="evidence" value="ECO:0007669"/>
    <property type="project" value="EnsemblFungi"/>
</dbReference>
<dbReference type="GO" id="GO:0005886">
    <property type="term" value="C:plasma membrane"/>
    <property type="evidence" value="ECO:0007669"/>
    <property type="project" value="UniProtKB-SubCell"/>
</dbReference>
<dbReference type="GO" id="GO:0004100">
    <property type="term" value="F:chitin synthase activity"/>
    <property type="evidence" value="ECO:0007669"/>
    <property type="project" value="UniProtKB-EC"/>
</dbReference>
<dbReference type="GO" id="GO:0006031">
    <property type="term" value="P:chitin biosynthetic process"/>
    <property type="evidence" value="ECO:0007669"/>
    <property type="project" value="EnsemblFungi"/>
</dbReference>
<dbReference type="GO" id="GO:1902404">
    <property type="term" value="P:mitotic actomyosin contractile ring contraction"/>
    <property type="evidence" value="ECO:0007669"/>
    <property type="project" value="EnsemblFungi"/>
</dbReference>
<dbReference type="CDD" id="cd04190">
    <property type="entry name" value="Chitin_synth_C"/>
    <property type="match status" value="1"/>
</dbReference>
<dbReference type="InterPro" id="IPR004835">
    <property type="entry name" value="Chitin_synth"/>
</dbReference>
<dbReference type="InterPro" id="IPR004834">
    <property type="entry name" value="Chitin_synth_fun"/>
</dbReference>
<dbReference type="InterPro" id="IPR013616">
    <property type="entry name" value="Chitin_synth_N"/>
</dbReference>
<dbReference type="PANTHER" id="PTHR22914">
    <property type="entry name" value="CHITIN SYNTHASE"/>
    <property type="match status" value="1"/>
</dbReference>
<dbReference type="PANTHER" id="PTHR22914:SF38">
    <property type="entry name" value="CHITIN SYNTHASE 2"/>
    <property type="match status" value="1"/>
</dbReference>
<dbReference type="Pfam" id="PF01644">
    <property type="entry name" value="Chitin_synth_1"/>
    <property type="match status" value="1"/>
</dbReference>
<dbReference type="Pfam" id="PF08407">
    <property type="entry name" value="Chitin_synth_1N"/>
    <property type="match status" value="1"/>
</dbReference>
<organism>
    <name type="scientific">Pyricularia oryzae (strain 70-15 / ATCC MYA-4617 / FGSC 8958)</name>
    <name type="common">Rice blast fungus</name>
    <name type="synonym">Magnaporthe oryzae</name>
    <dbReference type="NCBI Taxonomy" id="242507"/>
    <lineage>
        <taxon>Eukaryota</taxon>
        <taxon>Fungi</taxon>
        <taxon>Dikarya</taxon>
        <taxon>Ascomycota</taxon>
        <taxon>Pezizomycotina</taxon>
        <taxon>Sordariomycetes</taxon>
        <taxon>Sordariomycetidae</taxon>
        <taxon>Magnaporthales</taxon>
        <taxon>Pyriculariaceae</taxon>
        <taxon>Pyricularia</taxon>
    </lineage>
</organism>
<gene>
    <name evidence="5" type="primary">CHS2</name>
    <name type="ORF">MGG_04145</name>
</gene>
<proteinExistence type="evidence at transcript level"/>